<protein>
    <recommendedName>
        <fullName evidence="1">Crossover junction endodeoxyribonuclease RuvC</fullName>
        <ecNumber evidence="1">3.1.21.10</ecNumber>
    </recommendedName>
    <alternativeName>
        <fullName evidence="1">Holliday junction nuclease RuvC</fullName>
    </alternativeName>
    <alternativeName>
        <fullName evidence="1">Holliday junction resolvase RuvC</fullName>
    </alternativeName>
</protein>
<dbReference type="EC" id="3.1.21.10" evidence="1"/>
<dbReference type="EMBL" id="CP000447">
    <property type="protein sequence ID" value="ABI72028.1"/>
    <property type="molecule type" value="Genomic_DNA"/>
</dbReference>
<dbReference type="RefSeq" id="WP_011637638.1">
    <property type="nucleotide sequence ID" value="NC_008345.1"/>
</dbReference>
<dbReference type="SMR" id="Q081N7"/>
<dbReference type="STRING" id="318167.Sfri_2182"/>
<dbReference type="KEGG" id="sfr:Sfri_2182"/>
<dbReference type="eggNOG" id="COG0817">
    <property type="taxonomic scope" value="Bacteria"/>
</dbReference>
<dbReference type="HOGENOM" id="CLU_091257_2_1_6"/>
<dbReference type="OrthoDB" id="9805499at2"/>
<dbReference type="Proteomes" id="UP000000684">
    <property type="component" value="Chromosome"/>
</dbReference>
<dbReference type="GO" id="GO:0005737">
    <property type="term" value="C:cytoplasm"/>
    <property type="evidence" value="ECO:0007669"/>
    <property type="project" value="UniProtKB-SubCell"/>
</dbReference>
<dbReference type="GO" id="GO:0048476">
    <property type="term" value="C:Holliday junction resolvase complex"/>
    <property type="evidence" value="ECO:0007669"/>
    <property type="project" value="UniProtKB-UniRule"/>
</dbReference>
<dbReference type="GO" id="GO:0008821">
    <property type="term" value="F:crossover junction DNA endonuclease activity"/>
    <property type="evidence" value="ECO:0007669"/>
    <property type="project" value="UniProtKB-UniRule"/>
</dbReference>
<dbReference type="GO" id="GO:0003677">
    <property type="term" value="F:DNA binding"/>
    <property type="evidence" value="ECO:0007669"/>
    <property type="project" value="UniProtKB-KW"/>
</dbReference>
<dbReference type="GO" id="GO:0000287">
    <property type="term" value="F:magnesium ion binding"/>
    <property type="evidence" value="ECO:0007669"/>
    <property type="project" value="UniProtKB-UniRule"/>
</dbReference>
<dbReference type="GO" id="GO:0006310">
    <property type="term" value="P:DNA recombination"/>
    <property type="evidence" value="ECO:0007669"/>
    <property type="project" value="UniProtKB-UniRule"/>
</dbReference>
<dbReference type="GO" id="GO:0006281">
    <property type="term" value="P:DNA repair"/>
    <property type="evidence" value="ECO:0007669"/>
    <property type="project" value="UniProtKB-UniRule"/>
</dbReference>
<dbReference type="CDD" id="cd16962">
    <property type="entry name" value="RuvC"/>
    <property type="match status" value="1"/>
</dbReference>
<dbReference type="FunFam" id="3.30.420.10:FF:000002">
    <property type="entry name" value="Crossover junction endodeoxyribonuclease RuvC"/>
    <property type="match status" value="1"/>
</dbReference>
<dbReference type="Gene3D" id="3.30.420.10">
    <property type="entry name" value="Ribonuclease H-like superfamily/Ribonuclease H"/>
    <property type="match status" value="1"/>
</dbReference>
<dbReference type="HAMAP" id="MF_00034">
    <property type="entry name" value="RuvC"/>
    <property type="match status" value="1"/>
</dbReference>
<dbReference type="InterPro" id="IPR012337">
    <property type="entry name" value="RNaseH-like_sf"/>
</dbReference>
<dbReference type="InterPro" id="IPR036397">
    <property type="entry name" value="RNaseH_sf"/>
</dbReference>
<dbReference type="InterPro" id="IPR020563">
    <property type="entry name" value="X-over_junc_endoDNase_Mg_BS"/>
</dbReference>
<dbReference type="InterPro" id="IPR002176">
    <property type="entry name" value="X-over_junc_endoDNase_RuvC"/>
</dbReference>
<dbReference type="NCBIfam" id="NF000711">
    <property type="entry name" value="PRK00039.2-1"/>
    <property type="match status" value="1"/>
</dbReference>
<dbReference type="NCBIfam" id="TIGR00228">
    <property type="entry name" value="ruvC"/>
    <property type="match status" value="1"/>
</dbReference>
<dbReference type="PANTHER" id="PTHR30194">
    <property type="entry name" value="CROSSOVER JUNCTION ENDODEOXYRIBONUCLEASE RUVC"/>
    <property type="match status" value="1"/>
</dbReference>
<dbReference type="PANTHER" id="PTHR30194:SF3">
    <property type="entry name" value="CROSSOVER JUNCTION ENDODEOXYRIBONUCLEASE RUVC"/>
    <property type="match status" value="1"/>
</dbReference>
<dbReference type="Pfam" id="PF02075">
    <property type="entry name" value="RuvC"/>
    <property type="match status" value="1"/>
</dbReference>
<dbReference type="PRINTS" id="PR00696">
    <property type="entry name" value="RSOLVASERUVC"/>
</dbReference>
<dbReference type="SUPFAM" id="SSF53098">
    <property type="entry name" value="Ribonuclease H-like"/>
    <property type="match status" value="1"/>
</dbReference>
<dbReference type="PROSITE" id="PS01321">
    <property type="entry name" value="RUVC"/>
    <property type="match status" value="1"/>
</dbReference>
<evidence type="ECO:0000255" key="1">
    <source>
        <dbReference type="HAMAP-Rule" id="MF_00034"/>
    </source>
</evidence>
<keyword id="KW-0963">Cytoplasm</keyword>
<keyword id="KW-0227">DNA damage</keyword>
<keyword id="KW-0233">DNA recombination</keyword>
<keyword id="KW-0234">DNA repair</keyword>
<keyword id="KW-0238">DNA-binding</keyword>
<keyword id="KW-0255">Endonuclease</keyword>
<keyword id="KW-0378">Hydrolase</keyword>
<keyword id="KW-0460">Magnesium</keyword>
<keyword id="KW-0479">Metal-binding</keyword>
<keyword id="KW-0540">Nuclease</keyword>
<keyword id="KW-1185">Reference proteome</keyword>
<reference key="1">
    <citation type="submission" date="2006-08" db="EMBL/GenBank/DDBJ databases">
        <title>Complete sequence of Shewanella frigidimarina NCIMB 400.</title>
        <authorList>
            <consortium name="US DOE Joint Genome Institute"/>
            <person name="Copeland A."/>
            <person name="Lucas S."/>
            <person name="Lapidus A."/>
            <person name="Barry K."/>
            <person name="Detter J.C."/>
            <person name="Glavina del Rio T."/>
            <person name="Hammon N."/>
            <person name="Israni S."/>
            <person name="Dalin E."/>
            <person name="Tice H."/>
            <person name="Pitluck S."/>
            <person name="Fredrickson J.K."/>
            <person name="Kolker E."/>
            <person name="McCuel L.A."/>
            <person name="DiChristina T."/>
            <person name="Nealson K.H."/>
            <person name="Newman D."/>
            <person name="Tiedje J.M."/>
            <person name="Zhou J."/>
            <person name="Romine M.F."/>
            <person name="Culley D.E."/>
            <person name="Serres M."/>
            <person name="Chertkov O."/>
            <person name="Brettin T."/>
            <person name="Bruce D."/>
            <person name="Han C."/>
            <person name="Tapia R."/>
            <person name="Gilna P."/>
            <person name="Schmutz J."/>
            <person name="Larimer F."/>
            <person name="Land M."/>
            <person name="Hauser L."/>
            <person name="Kyrpides N."/>
            <person name="Mikhailova N."/>
            <person name="Richardson P."/>
        </authorList>
    </citation>
    <scope>NUCLEOTIDE SEQUENCE [LARGE SCALE GENOMIC DNA]</scope>
    <source>
        <strain>NCIMB 400</strain>
    </source>
</reference>
<name>RUVC_SHEFN</name>
<gene>
    <name evidence="1" type="primary">ruvC</name>
    <name type="ordered locus">Sfri_2182</name>
</gene>
<comment type="function">
    <text evidence="1">The RuvA-RuvB-RuvC complex processes Holliday junction (HJ) DNA during genetic recombination and DNA repair. Endonuclease that resolves HJ intermediates. Cleaves cruciform DNA by making single-stranded nicks across the HJ at symmetrical positions within the homologous arms, yielding a 5'-phosphate and a 3'-hydroxyl group; requires a central core of homology in the junction. The consensus cleavage sequence is 5'-(A/T)TT(C/G)-3'. Cleavage occurs on the 3'-side of the TT dinucleotide at the point of strand exchange. HJ branch migration catalyzed by RuvA-RuvB allows RuvC to scan DNA until it finds its consensus sequence, where it cleaves and resolves the cruciform DNA.</text>
</comment>
<comment type="catalytic activity">
    <reaction evidence="1">
        <text>Endonucleolytic cleavage at a junction such as a reciprocal single-stranded crossover between two homologous DNA duplexes (Holliday junction).</text>
        <dbReference type="EC" id="3.1.21.10"/>
    </reaction>
</comment>
<comment type="cofactor">
    <cofactor evidence="1">
        <name>Mg(2+)</name>
        <dbReference type="ChEBI" id="CHEBI:18420"/>
    </cofactor>
    <text evidence="1">Binds 2 Mg(2+) ion per subunit.</text>
</comment>
<comment type="subunit">
    <text evidence="1">Homodimer which binds Holliday junction (HJ) DNA. The HJ becomes 2-fold symmetrical on binding to RuvC with unstacked arms; it has a different conformation from HJ DNA in complex with RuvA. In the full resolvosome a probable DNA-RuvA(4)-RuvB(12)-RuvC(2) complex forms which resolves the HJ.</text>
</comment>
<comment type="subcellular location">
    <subcellularLocation>
        <location evidence="1">Cytoplasm</location>
    </subcellularLocation>
</comment>
<comment type="similarity">
    <text evidence="1">Belongs to the RuvC family.</text>
</comment>
<sequence>MAIILGVDPGSRITGYGVIQCQGRQQIYLGSGCIRTSADDLPQRLQQIYAGLCEIITQYKPDEFAIERVFMAKNADSALKLGQARGAAIVAATCAGLPVAEYSATQIKSAVVGTGRAQKTQVQHMIKQLLKLPASPQADAADALGVAICHFHTYQSLIAMGGKASSRTYGRYK</sequence>
<accession>Q081N7</accession>
<organism>
    <name type="scientific">Shewanella frigidimarina (strain NCIMB 400)</name>
    <dbReference type="NCBI Taxonomy" id="318167"/>
    <lineage>
        <taxon>Bacteria</taxon>
        <taxon>Pseudomonadati</taxon>
        <taxon>Pseudomonadota</taxon>
        <taxon>Gammaproteobacteria</taxon>
        <taxon>Alteromonadales</taxon>
        <taxon>Shewanellaceae</taxon>
        <taxon>Shewanella</taxon>
    </lineage>
</organism>
<feature type="chain" id="PRO_1000002829" description="Crossover junction endodeoxyribonuclease RuvC">
    <location>
        <begin position="1"/>
        <end position="173"/>
    </location>
</feature>
<feature type="active site" evidence="1">
    <location>
        <position position="8"/>
    </location>
</feature>
<feature type="active site" evidence="1">
    <location>
        <position position="67"/>
    </location>
</feature>
<feature type="active site" evidence="1">
    <location>
        <position position="139"/>
    </location>
</feature>
<feature type="binding site" evidence="1">
    <location>
        <position position="8"/>
    </location>
    <ligand>
        <name>Mg(2+)</name>
        <dbReference type="ChEBI" id="CHEBI:18420"/>
        <label>1</label>
    </ligand>
</feature>
<feature type="binding site" evidence="1">
    <location>
        <position position="67"/>
    </location>
    <ligand>
        <name>Mg(2+)</name>
        <dbReference type="ChEBI" id="CHEBI:18420"/>
        <label>2</label>
    </ligand>
</feature>
<feature type="binding site" evidence="1">
    <location>
        <position position="139"/>
    </location>
    <ligand>
        <name>Mg(2+)</name>
        <dbReference type="ChEBI" id="CHEBI:18420"/>
        <label>1</label>
    </ligand>
</feature>
<proteinExistence type="inferred from homology"/>